<gene>
    <name type="primary">OMT3</name>
    <name type="ordered locus">Sb06g000820</name>
</gene>
<accession>A8QW53</accession>
<reference key="1">
    <citation type="journal article" date="2008" name="J. Biol. Chem.">
        <title>A functional genomics investigation of allelochemical biosynthesis in Sorghum bicolor root hairs.</title>
        <authorList>
            <person name="Baerson S.R."/>
            <person name="Dayan F.E."/>
            <person name="Rimando A.M."/>
            <person name="Nanayakkara N.P."/>
            <person name="Liu C.J."/>
            <person name="Schroder J."/>
            <person name="Fishbein M."/>
            <person name="Pan Z."/>
            <person name="Kagan I.A."/>
            <person name="Pratt L.H."/>
            <person name="Cordonnier-Pratt M.M."/>
            <person name="Duke S.O."/>
        </authorList>
    </citation>
    <scope>NUCLEOTIDE SEQUENCE [MRNA]</scope>
    <scope>FUNCTION</scope>
    <scope>CATALYTIC ACTIVITY</scope>
    <scope>TISSUE SPECIFICITY</scope>
    <scope>3D-STRUCTURE MODELING</scope>
    <scope>BIOPHYSICOCHEMICAL PROPERTIES</scope>
</reference>
<reference key="2">
    <citation type="journal article" date="2009" name="Nature">
        <title>The Sorghum bicolor genome and the diversification of grasses.</title>
        <authorList>
            <person name="Paterson A.H."/>
            <person name="Bowers J.E."/>
            <person name="Bruggmann R."/>
            <person name="Dubchak I."/>
            <person name="Grimwood J."/>
            <person name="Gundlach H."/>
            <person name="Haberer G."/>
            <person name="Hellsten U."/>
            <person name="Mitros T."/>
            <person name="Poliakov A."/>
            <person name="Schmutz J."/>
            <person name="Spannagl M."/>
            <person name="Tang H."/>
            <person name="Wang X."/>
            <person name="Wicker T."/>
            <person name="Bharti A.K."/>
            <person name="Chapman J."/>
            <person name="Feltus F.A."/>
            <person name="Gowik U."/>
            <person name="Grigoriev I.V."/>
            <person name="Lyons E."/>
            <person name="Maher C.A."/>
            <person name="Martis M."/>
            <person name="Narechania A."/>
            <person name="Otillar R.P."/>
            <person name="Penning B.W."/>
            <person name="Salamov A.A."/>
            <person name="Wang Y."/>
            <person name="Zhang L."/>
            <person name="Carpita N.C."/>
            <person name="Freeling M."/>
            <person name="Gingle A.R."/>
            <person name="Hash C.T."/>
            <person name="Keller B."/>
            <person name="Klein P."/>
            <person name="Kresovich S."/>
            <person name="McCann M.C."/>
            <person name="Ming R."/>
            <person name="Peterson D.G."/>
            <person name="Mehboob-ur-Rahman M."/>
            <person name="Ware D."/>
            <person name="Westhoff P."/>
            <person name="Mayer K.F.X."/>
            <person name="Messing J."/>
            <person name="Rokhsar D.S."/>
        </authorList>
    </citation>
    <scope>NUCLEOTIDE SEQUENCE [LARGE SCALE GENOMIC DNA]</scope>
    <source>
        <strain>cv. BTx623</strain>
    </source>
</reference>
<reference key="3">
    <citation type="journal article" date="2018" name="Plant J.">
        <title>The Sorghum bicolor reference genome: improved assembly, gene annotations, a transcriptome atlas, and signatures of genome organization.</title>
        <authorList>
            <person name="McCormick R.F."/>
            <person name="Truong S.K."/>
            <person name="Sreedasyam A."/>
            <person name="Jenkins J."/>
            <person name="Shu S."/>
            <person name="Sims D."/>
            <person name="Kennedy M."/>
            <person name="Amirebrahimi M."/>
            <person name="Weers B.D."/>
            <person name="McKinley B."/>
            <person name="Mattison A."/>
            <person name="Morishige D.T."/>
            <person name="Grimwood J."/>
            <person name="Schmutz J."/>
            <person name="Mullet J.E."/>
        </authorList>
    </citation>
    <scope>GENOME REANNOTATION</scope>
    <source>
        <strain>cv. BTx623</strain>
    </source>
</reference>
<evidence type="ECO:0000250" key="1"/>
<evidence type="ECO:0000255" key="2">
    <source>
        <dbReference type="PROSITE-ProRule" id="PRU01020"/>
    </source>
</evidence>
<evidence type="ECO:0000269" key="3">
    <source>
    </source>
</evidence>
<comment type="function">
    <text evidence="3">O-methyltransferase involved in the biosynthetic pathway of the phytotoxin sorgoleone, a potent broad-spectrum inhibitor active against many agronomically important monocot and dicot weed species. Substrate specificity for alkylresorcinols. Strong preference for a five carbons alkyl side chain.</text>
</comment>
<comment type="catalytic activity">
    <reaction evidence="3">
        <text>(8Z,11Z)-5-(pentadeca-8,11,14-trien-1-yl)resorcinol + S-adenosyl-L-methionine = (8Z,11Z)-5-(pentadeca- 8,11,14-trien-1-yl)resorcinol-3-methyl ether + S-adenosyl-L-homocysteine + H(+)</text>
        <dbReference type="Rhea" id="RHEA:26325"/>
        <dbReference type="ChEBI" id="CHEBI:15378"/>
        <dbReference type="ChEBI" id="CHEBI:52680"/>
        <dbReference type="ChEBI" id="CHEBI:52681"/>
        <dbReference type="ChEBI" id="CHEBI:57856"/>
        <dbReference type="ChEBI" id="CHEBI:59789"/>
        <dbReference type="EC" id="2.1.1.n7"/>
    </reaction>
</comment>
<comment type="biophysicochemical properties">
    <kinetics>
        <KM evidence="3">1436 uM for 5-n-propyl-resorcinol</KM>
        <KM evidence="3">481 uM for 5-n-butyl-resorcinol</KM>
        <KM evidence="3">152 uM for 5-n-pentyl-resorcinol</KM>
        <KM evidence="3">72 uM for 5-n-hexyl-resorcinol</KM>
        <KM evidence="3">23 uM for 5-n-heptyl-resorcinol</KM>
        <KM evidence="3">67.5 uM for S-adenosyl-L-methionine</KM>
        <Vmax evidence="3">4.3 pmol/sec/mg enzyme with 5-n-propyl-resorcinol as methyl acceptor</Vmax>
        <Vmax evidence="3">9.2 pmol/sec/mg enzyme with 5-n-butyl-resorcinol as methyl acceptor</Vmax>
        <Vmax evidence="3">10.9 pmol/sec/mg enzyme with 5-n-pentyl-resorcinol as methyl acceptor</Vmax>
        <Vmax evidence="3">7.0 pmol/sec/mg enzyme with 5-n-hexyl-resorcinol as methyl acceptor</Vmax>
        <Vmax evidence="3">2.9 pmol/sec/mg enzyme with 5-n-heptyl-resorcinol as methyl acceptor</Vmax>
    </kinetics>
</comment>
<comment type="subunit">
    <text evidence="1">Homodimer.</text>
</comment>
<comment type="tissue specificity">
    <text evidence="3">Expressed predominantly in root hairs.</text>
</comment>
<comment type="similarity">
    <text evidence="2">Belongs to the class I-like SAM-binding methyltransferase superfamily. Cation-independent O-methyltransferase family. COMT subfamily.</text>
</comment>
<name>OMT3_SORBI</name>
<organism>
    <name type="scientific">Sorghum bicolor</name>
    <name type="common">Sorghum</name>
    <name type="synonym">Sorghum vulgare</name>
    <dbReference type="NCBI Taxonomy" id="4558"/>
    <lineage>
        <taxon>Eukaryota</taxon>
        <taxon>Viridiplantae</taxon>
        <taxon>Streptophyta</taxon>
        <taxon>Embryophyta</taxon>
        <taxon>Tracheophyta</taxon>
        <taxon>Spermatophyta</taxon>
        <taxon>Magnoliopsida</taxon>
        <taxon>Liliopsida</taxon>
        <taxon>Poales</taxon>
        <taxon>Poaceae</taxon>
        <taxon>PACMAD clade</taxon>
        <taxon>Panicoideae</taxon>
        <taxon>Andropogonodae</taxon>
        <taxon>Andropogoneae</taxon>
        <taxon>Sorghinae</taxon>
        <taxon>Sorghum</taxon>
    </lineage>
</organism>
<sequence>MVLISEDSRELLQAHVELWNQTYSFMKSVALAVALDLHIADAIHRRGGAATLSQILGEIGVRPCKLPGLHRIMRVLTVSGTFTIVQPSAETMSSESDGREPVYKLTTASSLLVSSESSATASLSPMLNHVLSPFRDSPLSMGLTAWFRHDEDEQAPGMCPFTLMYGTTLWEVCRRDDAINALFNNAMAADSNFLMQILLKEFSEVFLGIDSLVDVAGGVGGATMAIAAAFPCLKCTVLDLPHVVAKAPSSSIGNVQFVGGDMFESIPPANVVLLKWILHDWSNDECIKILKNCKQAIPSRDAGGKIIIIDVVVGSDSSDTKLLETQVIYDLHLMKIGGVERDEQEWKKIFLEAGFKDYKIMPILGLRSIIELYP</sequence>
<dbReference type="EC" id="2.1.1.n7"/>
<dbReference type="EMBL" id="EF189708">
    <property type="protein sequence ID" value="ABP01564.1"/>
    <property type="molecule type" value="mRNA"/>
</dbReference>
<dbReference type="EMBL" id="CM000765">
    <property type="protein sequence ID" value="EES11753.1"/>
    <property type="molecule type" value="Genomic_DNA"/>
</dbReference>
<dbReference type="RefSeq" id="XP_002447425.1">
    <property type="nucleotide sequence ID" value="XM_002447380.1"/>
</dbReference>
<dbReference type="SMR" id="A8QW53"/>
<dbReference type="STRING" id="4558.A8QW53"/>
<dbReference type="EnsemblPlants" id="EES11753">
    <property type="protein sequence ID" value="EES11753"/>
    <property type="gene ID" value="SORBI_3006G007900"/>
</dbReference>
<dbReference type="GeneID" id="8080259"/>
<dbReference type="Gramene" id="EES11753">
    <property type="protein sequence ID" value="EES11753"/>
    <property type="gene ID" value="SORBI_3006G007900"/>
</dbReference>
<dbReference type="KEGG" id="sbi:8080259"/>
<dbReference type="eggNOG" id="KOG3178">
    <property type="taxonomic scope" value="Eukaryota"/>
</dbReference>
<dbReference type="HOGENOM" id="CLU_005533_7_0_1"/>
<dbReference type="InParanoid" id="A8QW53"/>
<dbReference type="OMA" id="INHERTP"/>
<dbReference type="OrthoDB" id="2410195at2759"/>
<dbReference type="BRENDA" id="2.1.1.240">
    <property type="organism ID" value="5768"/>
</dbReference>
<dbReference type="SABIO-RK" id="A8QW53"/>
<dbReference type="Proteomes" id="UP000000768">
    <property type="component" value="Chromosome 6"/>
</dbReference>
<dbReference type="GO" id="GO:0102990">
    <property type="term" value="F:5-n-alk(en)ylresorcinol O-methyltransferase activity"/>
    <property type="evidence" value="ECO:0007669"/>
    <property type="project" value="RHEA"/>
</dbReference>
<dbReference type="GO" id="GO:0008171">
    <property type="term" value="F:O-methyltransferase activity"/>
    <property type="evidence" value="ECO:0000314"/>
    <property type="project" value="UniProtKB"/>
</dbReference>
<dbReference type="GO" id="GO:0046983">
    <property type="term" value="F:protein dimerization activity"/>
    <property type="evidence" value="ECO:0007669"/>
    <property type="project" value="InterPro"/>
</dbReference>
<dbReference type="GO" id="GO:0008757">
    <property type="term" value="F:S-adenosylmethionine-dependent methyltransferase activity"/>
    <property type="evidence" value="ECO:0000314"/>
    <property type="project" value="UniProtKB"/>
</dbReference>
<dbReference type="GO" id="GO:0009058">
    <property type="term" value="P:biosynthetic process"/>
    <property type="evidence" value="ECO:0000318"/>
    <property type="project" value="GO_Central"/>
</dbReference>
<dbReference type="GO" id="GO:0032259">
    <property type="term" value="P:methylation"/>
    <property type="evidence" value="ECO:0000314"/>
    <property type="project" value="UniProtKB"/>
</dbReference>
<dbReference type="FunFam" id="3.40.50.150:FF:000057">
    <property type="entry name" value="O-methyltransferase ZRP4"/>
    <property type="match status" value="1"/>
</dbReference>
<dbReference type="Gene3D" id="3.40.50.150">
    <property type="entry name" value="Vaccinia Virus protein VP39"/>
    <property type="match status" value="1"/>
</dbReference>
<dbReference type="Gene3D" id="1.10.10.10">
    <property type="entry name" value="Winged helix-like DNA-binding domain superfamily/Winged helix DNA-binding domain"/>
    <property type="match status" value="1"/>
</dbReference>
<dbReference type="InterPro" id="IPR016461">
    <property type="entry name" value="COMT-like"/>
</dbReference>
<dbReference type="InterPro" id="IPR001077">
    <property type="entry name" value="O_MeTrfase_dom"/>
</dbReference>
<dbReference type="InterPro" id="IPR012967">
    <property type="entry name" value="Plant_O-MeTrfase_dimerisation"/>
</dbReference>
<dbReference type="InterPro" id="IPR029063">
    <property type="entry name" value="SAM-dependent_MTases_sf"/>
</dbReference>
<dbReference type="InterPro" id="IPR036388">
    <property type="entry name" value="WH-like_DNA-bd_sf"/>
</dbReference>
<dbReference type="InterPro" id="IPR036390">
    <property type="entry name" value="WH_DNA-bd_sf"/>
</dbReference>
<dbReference type="PANTHER" id="PTHR11746">
    <property type="entry name" value="O-METHYLTRANSFERASE"/>
    <property type="match status" value="1"/>
</dbReference>
<dbReference type="Pfam" id="PF08100">
    <property type="entry name" value="Dimerisation"/>
    <property type="match status" value="1"/>
</dbReference>
<dbReference type="Pfam" id="PF00891">
    <property type="entry name" value="Methyltransf_2"/>
    <property type="match status" value="1"/>
</dbReference>
<dbReference type="PIRSF" id="PIRSF005739">
    <property type="entry name" value="O-mtase"/>
    <property type="match status" value="1"/>
</dbReference>
<dbReference type="SUPFAM" id="SSF53335">
    <property type="entry name" value="S-adenosyl-L-methionine-dependent methyltransferases"/>
    <property type="match status" value="1"/>
</dbReference>
<dbReference type="SUPFAM" id="SSF46785">
    <property type="entry name" value="Winged helix' DNA-binding domain"/>
    <property type="match status" value="1"/>
</dbReference>
<dbReference type="PROSITE" id="PS51683">
    <property type="entry name" value="SAM_OMT_II"/>
    <property type="match status" value="1"/>
</dbReference>
<keyword id="KW-0489">Methyltransferase</keyword>
<keyword id="KW-1185">Reference proteome</keyword>
<keyword id="KW-0949">S-adenosyl-L-methionine</keyword>
<keyword id="KW-0808">Transferase</keyword>
<proteinExistence type="evidence at protein level"/>
<protein>
    <recommendedName>
        <fullName>5-pentadecatrienyl resorcinol O-methyltransferase</fullName>
        <ecNumber>2.1.1.n7</ecNumber>
    </recommendedName>
    <alternativeName>
        <fullName>O-methyltransferase 3</fullName>
        <shortName>SbOMT3</shortName>
    </alternativeName>
</protein>
<feature type="chain" id="PRO_0000409379" description="5-pentadecatrienyl resorcinol O-methyltransferase">
    <location>
        <begin position="1"/>
        <end position="374"/>
    </location>
</feature>
<feature type="active site" description="Proton acceptor" evidence="2">
    <location>
        <position position="279"/>
    </location>
</feature>
<feature type="binding site" evidence="2">
    <location>
        <position position="239"/>
    </location>
    <ligand>
        <name>S-adenosyl-L-methionine</name>
        <dbReference type="ChEBI" id="CHEBI:59789"/>
    </ligand>
</feature>
<feature type="binding site" evidence="2">
    <location>
        <position position="261"/>
    </location>
    <ligand>
        <name>S-adenosyl-L-methionine</name>
        <dbReference type="ChEBI" id="CHEBI:59789"/>
    </ligand>
</feature>
<feature type="binding site" evidence="2">
    <location>
        <position position="262"/>
    </location>
    <ligand>
        <name>S-adenosyl-L-methionine</name>
        <dbReference type="ChEBI" id="CHEBI:59789"/>
    </ligand>
</feature>
<feature type="binding site" evidence="2">
    <location>
        <position position="275"/>
    </location>
    <ligand>
        <name>S-adenosyl-L-methionine</name>
        <dbReference type="ChEBI" id="CHEBI:59789"/>
    </ligand>
</feature>